<organism>
    <name type="scientific">Mus musculus</name>
    <name type="common">Mouse</name>
    <dbReference type="NCBI Taxonomy" id="10090"/>
    <lineage>
        <taxon>Eukaryota</taxon>
        <taxon>Metazoa</taxon>
        <taxon>Chordata</taxon>
        <taxon>Craniata</taxon>
        <taxon>Vertebrata</taxon>
        <taxon>Euteleostomi</taxon>
        <taxon>Mammalia</taxon>
        <taxon>Eutheria</taxon>
        <taxon>Euarchontoglires</taxon>
        <taxon>Glires</taxon>
        <taxon>Rodentia</taxon>
        <taxon>Myomorpha</taxon>
        <taxon>Muroidea</taxon>
        <taxon>Muridae</taxon>
        <taxon>Murinae</taxon>
        <taxon>Mus</taxon>
        <taxon>Mus</taxon>
    </lineage>
</organism>
<reference key="1">
    <citation type="journal article" date="1992" name="EMBO J.">
        <title>Analysis of the murine Hox-2.7 gene: conserved alternative transcripts with differential distributions in the nervous system and the potential for shared regulatory regions.</title>
        <authorList>
            <person name="Sham M.H."/>
            <person name="Hunt P."/>
            <person name="Nonchev S."/>
            <person name="Papalopulu N."/>
            <person name="Graham A."/>
            <person name="Boncinelli E."/>
            <person name="Krumlauf R."/>
        </authorList>
    </citation>
    <scope>NUCLEOTIDE SEQUENCE [MRNA]</scope>
</reference>
<reference key="2">
    <citation type="journal article" date="1994" name="Int. J. Biochem.">
        <title>The 5'-sequence of the murine Hox-b3 (Hox-2.7) gene and its intron contain multiple transcription-regulatory elements.</title>
        <authorList>
            <person name="Brown W.M."/>
            <person name="Taylor G.R."/>
        </authorList>
    </citation>
    <scope>NUCLEOTIDE SEQUENCE [GENOMIC DNA]</scope>
</reference>
<reference key="3">
    <citation type="journal article" date="1987" name="DNA">
        <title>New murine homeoboxes: structure, chromosomal assignment, and differential expression in adult erythropoiesis.</title>
        <authorList>
            <person name="Lonai P."/>
            <person name="Arman E."/>
            <person name="Czosnek H."/>
            <person name="Ruddle F.H."/>
            <person name="Blatt C."/>
        </authorList>
    </citation>
    <scope>NUCLEOTIDE SEQUENCE [GENOMIC DNA] OF 152-361</scope>
</reference>
<reference key="4">
    <citation type="journal article" date="1988" name="Genes Dev.">
        <title>Characterization of a murine homeo box gene, Hox-2.6, related to the Drosophila Deformed gene.</title>
        <authorList>
            <person name="Graham A."/>
            <person name="Papalopulu N."/>
            <person name="Lorimer J."/>
            <person name="McVey J.H."/>
            <person name="Tuddenham E.G.D."/>
            <person name="Krumlauf R."/>
        </authorList>
    </citation>
    <scope>NUCLEOTIDE SEQUENCE OF 181-265</scope>
</reference>
<accession>P09026</accession>
<accession>P10285</accession>
<accession>Q4PJ06</accession>
<accession>Q61680</accession>
<feature type="chain" id="PRO_0000200118" description="Homeobox protein Hox-B3">
    <location>
        <begin position="1"/>
        <end position="433"/>
    </location>
</feature>
<feature type="DNA-binding region" description="Homeobox" evidence="1">
    <location>
        <begin position="191"/>
        <end position="250"/>
    </location>
</feature>
<feature type="region of interest" description="Disordered" evidence="2">
    <location>
        <begin position="63"/>
        <end position="124"/>
    </location>
</feature>
<feature type="region of interest" description="Disordered" evidence="2">
    <location>
        <begin position="136"/>
        <end position="195"/>
    </location>
</feature>
<feature type="region of interest" description="Disordered" evidence="2">
    <location>
        <begin position="249"/>
        <end position="276"/>
    </location>
</feature>
<feature type="region of interest" description="Disordered" evidence="2">
    <location>
        <begin position="389"/>
        <end position="433"/>
    </location>
</feature>
<feature type="short sequence motif" description="Antp-type hexapeptide">
    <location>
        <begin position="129"/>
        <end position="134"/>
    </location>
</feature>
<feature type="compositionally biased region" description="Pro residues" evidence="2">
    <location>
        <begin position="79"/>
        <end position="94"/>
    </location>
</feature>
<feature type="compositionally biased region" description="Low complexity" evidence="2">
    <location>
        <begin position="95"/>
        <end position="104"/>
    </location>
</feature>
<feature type="compositionally biased region" description="Low complexity" evidence="2">
    <location>
        <begin position="111"/>
        <end position="121"/>
    </location>
</feature>
<feature type="compositionally biased region" description="Polar residues" evidence="2">
    <location>
        <begin position="139"/>
        <end position="148"/>
    </location>
</feature>
<feature type="compositionally biased region" description="Gly residues" evidence="2">
    <location>
        <begin position="151"/>
        <end position="182"/>
    </location>
</feature>
<feature type="sequence conflict" description="In Ref. 1; CAA46951/AAA08719." evidence="3" ref="1">
    <original>G</original>
    <variation>C</variation>
    <location>
        <position position="113"/>
    </location>
</feature>
<feature type="sequence conflict" description="In Ref. 1; CAA46951/AAA08719." evidence="3" ref="1">
    <original>A</original>
    <variation>S</variation>
    <location>
        <position position="119"/>
    </location>
</feature>
<feature type="sequence conflict" description="In Ref. 3; AAA37840." evidence="3" ref="3">
    <original>GCGGGGGGGGGGGGGGG</original>
    <variation>RLWWWRPAVVAAAAAVR</variation>
    <location>
        <begin position="152"/>
        <end position="168"/>
    </location>
</feature>
<feature type="sequence conflict" description="In Ref. 4." evidence="3" ref="4">
    <original>D</original>
    <variation>N</variation>
    <location>
        <position position="182"/>
    </location>
</feature>
<feature type="sequence conflict" description="In Ref. 3; AAA37840." evidence="3" ref="3">
    <original>LC</original>
    <variation>FV</variation>
    <location>
        <begin position="216"/>
        <end position="217"/>
    </location>
</feature>
<feature type="sequence conflict" description="In Ref. 3; AAA37840." evidence="3" ref="3">
    <original>S</original>
    <variation>L</variation>
    <location>
        <position position="330"/>
    </location>
</feature>
<feature type="sequence conflict" description="In Ref. 3." evidence="3" ref="3">
    <original>GAYGTPTMQGSPVYVGGGGY</original>
    <variation>APTGRPPCRAVRCMWAGVAT</variation>
    <location>
        <begin position="342"/>
        <end position="361"/>
    </location>
</feature>
<evidence type="ECO:0000255" key="1">
    <source>
        <dbReference type="PROSITE-ProRule" id="PRU00108"/>
    </source>
</evidence>
<evidence type="ECO:0000256" key="2">
    <source>
        <dbReference type="SAM" id="MobiDB-lite"/>
    </source>
</evidence>
<evidence type="ECO:0000305" key="3"/>
<name>HXB3_MOUSE</name>
<keyword id="KW-0217">Developmental protein</keyword>
<keyword id="KW-0238">DNA-binding</keyword>
<keyword id="KW-0371">Homeobox</keyword>
<keyword id="KW-0539">Nucleus</keyword>
<keyword id="KW-1185">Reference proteome</keyword>
<keyword id="KW-0804">Transcription</keyword>
<keyword id="KW-0805">Transcription regulation</keyword>
<protein>
    <recommendedName>
        <fullName>Homeobox protein Hox-B3</fullName>
    </recommendedName>
    <alternativeName>
        <fullName>Homeobox protein Hox-2.7</fullName>
    </alternativeName>
    <alternativeName>
        <fullName>Homeobox protein MH-23</fullName>
    </alternativeName>
</protein>
<sequence length="433" mass="44353">MQKATYYDNTAAALFGGYSSYPGSNGFGYDGPPQPPFQAATHLEGDYQRSACSLQSLGNAAPHAKSKELNGSCMRPGLAPEPLPAPPGSPPPSAAPTSTTSNSNNGGGPSKSGPPKCGAGSNSTLTKQIFPWMKESRQTSKLKNSSPGTAEGCGGGGGGGGGGGGGGGGSSGGGGGGGGGGDKSPPGSAASKRARTAYTSAQLVELEKEFHFNRYLCRPRRVEMANLLNLSERQIKIWFQNRRMKYKKDQKAKGLASSSGGPSPAGSPPQPMQSTAGFMNALHSMTPSYDSPSPPAFGKGHQNAYALPSNYQPPLKGCGAPQKYPPTPASEYEPHVLQANGGAYGTPTMQGSPVYVGGGGYADPLPPPAGPSLYGLNHLSHHPSGNLDYNGAAPMGPNQHHGPCDPHPTYTDLSSHHAPPQGRIQEAPKLTHL</sequence>
<comment type="function">
    <text>Sequence-specific transcription factor which is part of a developmental regulatory system that provides cells with specific positional identities on the anterior-posterior axis.</text>
</comment>
<comment type="subcellular location">
    <subcellularLocation>
        <location>Nucleus</location>
    </subcellularLocation>
</comment>
<comment type="similarity">
    <text evidence="3">Belongs to the Antp homeobox family.</text>
</comment>
<proteinExistence type="evidence at transcript level"/>
<gene>
    <name type="primary">Hoxb3</name>
    <name type="synonym">Hox-2.7</name>
    <name type="synonym">Hoxb-3</name>
</gene>
<dbReference type="EMBL" id="X66177">
    <property type="protein sequence ID" value="CAA46951.1"/>
    <property type="molecule type" value="mRNA"/>
</dbReference>
<dbReference type="EMBL" id="S35628">
    <property type="protein sequence ID" value="AAA08719.1"/>
    <property type="molecule type" value="mRNA"/>
</dbReference>
<dbReference type="EMBL" id="U02278">
    <property type="protein sequence ID" value="AAB60496.1"/>
    <property type="molecule type" value="Genomic_DNA"/>
</dbReference>
<dbReference type="EMBL" id="M18168">
    <property type="protein sequence ID" value="AAA37840.1"/>
    <property type="molecule type" value="Genomic_DNA"/>
</dbReference>
<dbReference type="CCDS" id="CCDS25299.1"/>
<dbReference type="PIR" id="S20963">
    <property type="entry name" value="S20963"/>
</dbReference>
<dbReference type="RefSeq" id="NP_001073338.1">
    <property type="nucleotide sequence ID" value="NM_001079869.1"/>
</dbReference>
<dbReference type="RefSeq" id="NP_034588.2">
    <property type="nucleotide sequence ID" value="NM_010458.2"/>
</dbReference>
<dbReference type="RefSeq" id="XP_006532346.1">
    <property type="nucleotide sequence ID" value="XM_006532283.5"/>
</dbReference>
<dbReference type="RefSeq" id="XP_006532347.1">
    <property type="nucleotide sequence ID" value="XM_006532284.4"/>
</dbReference>
<dbReference type="RefSeq" id="XP_006532348.1">
    <property type="nucleotide sequence ID" value="XM_006532285.4"/>
</dbReference>
<dbReference type="RefSeq" id="XP_006532349.1">
    <property type="nucleotide sequence ID" value="XM_006532286.5"/>
</dbReference>
<dbReference type="RefSeq" id="XP_006532351.1">
    <property type="nucleotide sequence ID" value="XM_006532288.3"/>
</dbReference>
<dbReference type="RefSeq" id="XP_006532352.1">
    <property type="nucleotide sequence ID" value="XM_006532289.5"/>
</dbReference>
<dbReference type="RefSeq" id="XP_006532353.1">
    <property type="nucleotide sequence ID" value="XM_006532290.4"/>
</dbReference>
<dbReference type="RefSeq" id="XP_011247059.1">
    <property type="nucleotide sequence ID" value="XM_011248757.3"/>
</dbReference>
<dbReference type="SMR" id="P09026"/>
<dbReference type="FunCoup" id="P09026">
    <property type="interactions" value="1605"/>
</dbReference>
<dbReference type="STRING" id="10090.ENSMUSP00000091476"/>
<dbReference type="GlyGen" id="P09026">
    <property type="glycosylation" value="1 site"/>
</dbReference>
<dbReference type="iPTMnet" id="P09026"/>
<dbReference type="PhosphoSitePlus" id="P09026"/>
<dbReference type="PaxDb" id="10090-ENSMUSP00000091476"/>
<dbReference type="Antibodypedia" id="4079">
    <property type="antibodies" value="148 antibodies from 22 providers"/>
</dbReference>
<dbReference type="DNASU" id="15410"/>
<dbReference type="Ensembl" id="ENSMUST00000055334.3">
    <property type="protein sequence ID" value="ENSMUSP00000053426.3"/>
    <property type="gene ID" value="ENSMUSG00000048763.12"/>
</dbReference>
<dbReference type="Ensembl" id="ENSMUST00000093944.10">
    <property type="protein sequence ID" value="ENSMUSP00000091476.4"/>
    <property type="gene ID" value="ENSMUSG00000048763.12"/>
</dbReference>
<dbReference type="GeneID" id="15410"/>
<dbReference type="KEGG" id="mmu:15410"/>
<dbReference type="UCSC" id="uc007lbw.1">
    <property type="organism name" value="mouse"/>
</dbReference>
<dbReference type="AGR" id="MGI:96184"/>
<dbReference type="CTD" id="3213"/>
<dbReference type="MGI" id="MGI:96184">
    <property type="gene designation" value="Hoxb3"/>
</dbReference>
<dbReference type="VEuPathDB" id="HostDB:ENSMUSG00000048763"/>
<dbReference type="eggNOG" id="KOG0489">
    <property type="taxonomic scope" value="Eukaryota"/>
</dbReference>
<dbReference type="GeneTree" id="ENSGT00940000159774"/>
<dbReference type="HOGENOM" id="CLU_051508_1_0_1"/>
<dbReference type="InParanoid" id="P09026"/>
<dbReference type="OMA" id="GCAAPQK"/>
<dbReference type="OrthoDB" id="6159439at2759"/>
<dbReference type="PhylomeDB" id="P09026"/>
<dbReference type="TreeFam" id="TF315938"/>
<dbReference type="BioGRID-ORCS" id="15410">
    <property type="hits" value="1 hit in 79 CRISPR screens"/>
</dbReference>
<dbReference type="ChiTaRS" id="Hoxb3">
    <property type="organism name" value="mouse"/>
</dbReference>
<dbReference type="PRO" id="PR:P09026"/>
<dbReference type="Proteomes" id="UP000000589">
    <property type="component" value="Chromosome 11"/>
</dbReference>
<dbReference type="RNAct" id="P09026">
    <property type="molecule type" value="protein"/>
</dbReference>
<dbReference type="Bgee" id="ENSMUSG00000048763">
    <property type="expression patterns" value="Expressed in vertebra pre-cartilage condensation and 163 other cell types or tissues"/>
</dbReference>
<dbReference type="ExpressionAtlas" id="P09026">
    <property type="expression patterns" value="baseline and differential"/>
</dbReference>
<dbReference type="GO" id="GO:0005654">
    <property type="term" value="C:nucleoplasm"/>
    <property type="evidence" value="ECO:0000304"/>
    <property type="project" value="Reactome"/>
</dbReference>
<dbReference type="GO" id="GO:0001228">
    <property type="term" value="F:DNA-binding transcription activator activity, RNA polymerase II-specific"/>
    <property type="evidence" value="ECO:0007669"/>
    <property type="project" value="Ensembl"/>
</dbReference>
<dbReference type="GO" id="GO:0000978">
    <property type="term" value="F:RNA polymerase II cis-regulatory region sequence-specific DNA binding"/>
    <property type="evidence" value="ECO:0000314"/>
    <property type="project" value="MGI"/>
</dbReference>
<dbReference type="GO" id="GO:0001525">
    <property type="term" value="P:angiogenesis"/>
    <property type="evidence" value="ECO:0007669"/>
    <property type="project" value="Ensembl"/>
</dbReference>
<dbReference type="GO" id="GO:0009952">
    <property type="term" value="P:anterior/posterior pattern specification"/>
    <property type="evidence" value="ECO:0000316"/>
    <property type="project" value="MGI"/>
</dbReference>
<dbReference type="GO" id="GO:0051216">
    <property type="term" value="P:cartilage development"/>
    <property type="evidence" value="ECO:0000316"/>
    <property type="project" value="MGI"/>
</dbReference>
<dbReference type="GO" id="GO:0060216">
    <property type="term" value="P:definitive hemopoiesis"/>
    <property type="evidence" value="ECO:0000316"/>
    <property type="project" value="MGI"/>
</dbReference>
<dbReference type="GO" id="GO:0048704">
    <property type="term" value="P:embryonic skeletal system morphogenesis"/>
    <property type="evidence" value="ECO:0000315"/>
    <property type="project" value="MGI"/>
</dbReference>
<dbReference type="GO" id="GO:0060324">
    <property type="term" value="P:face development"/>
    <property type="evidence" value="ECO:0000314"/>
    <property type="project" value="MGI"/>
</dbReference>
<dbReference type="GO" id="GO:0021615">
    <property type="term" value="P:glossopharyngeal nerve morphogenesis"/>
    <property type="evidence" value="ECO:0000316"/>
    <property type="project" value="MGI"/>
</dbReference>
<dbReference type="GO" id="GO:0002244">
    <property type="term" value="P:hematopoietic progenitor cell differentiation"/>
    <property type="evidence" value="ECO:0000315"/>
    <property type="project" value="MGI"/>
</dbReference>
<dbReference type="GO" id="GO:0000122">
    <property type="term" value="P:negative regulation of transcription by RNA polymerase II"/>
    <property type="evidence" value="ECO:0000314"/>
    <property type="project" value="MGI"/>
</dbReference>
<dbReference type="GO" id="GO:0050767">
    <property type="term" value="P:regulation of neurogenesis"/>
    <property type="evidence" value="ECO:0000314"/>
    <property type="project" value="MGI"/>
</dbReference>
<dbReference type="GO" id="GO:0021546">
    <property type="term" value="P:rhombomere development"/>
    <property type="evidence" value="ECO:0000314"/>
    <property type="project" value="MGI"/>
</dbReference>
<dbReference type="GO" id="GO:0030878">
    <property type="term" value="P:thyroid gland development"/>
    <property type="evidence" value="ECO:0000316"/>
    <property type="project" value="MGI"/>
</dbReference>
<dbReference type="CDD" id="cd00086">
    <property type="entry name" value="homeodomain"/>
    <property type="match status" value="1"/>
</dbReference>
<dbReference type="Gene3D" id="1.10.10.60">
    <property type="entry name" value="Homeodomain-like"/>
    <property type="match status" value="1"/>
</dbReference>
<dbReference type="InterPro" id="IPR025281">
    <property type="entry name" value="DUF4074"/>
</dbReference>
<dbReference type="InterPro" id="IPR001356">
    <property type="entry name" value="HD"/>
</dbReference>
<dbReference type="InterPro" id="IPR020479">
    <property type="entry name" value="HD_metazoa"/>
</dbReference>
<dbReference type="InterPro" id="IPR001827">
    <property type="entry name" value="Homeobox_Antennapedia_CS"/>
</dbReference>
<dbReference type="InterPro" id="IPR017970">
    <property type="entry name" value="Homeobox_CS"/>
</dbReference>
<dbReference type="InterPro" id="IPR009057">
    <property type="entry name" value="Homeodomain-like_sf"/>
</dbReference>
<dbReference type="PANTHER" id="PTHR45664:SF11">
    <property type="entry name" value="HOMEOBOX PROTEIN HOX-B3"/>
    <property type="match status" value="1"/>
</dbReference>
<dbReference type="PANTHER" id="PTHR45664">
    <property type="entry name" value="PROTEIN ZERKNUELLT 1-RELATED"/>
    <property type="match status" value="1"/>
</dbReference>
<dbReference type="Pfam" id="PF13293">
    <property type="entry name" value="DUF4074"/>
    <property type="match status" value="1"/>
</dbReference>
<dbReference type="Pfam" id="PF00046">
    <property type="entry name" value="Homeodomain"/>
    <property type="match status" value="1"/>
</dbReference>
<dbReference type="PRINTS" id="PR00024">
    <property type="entry name" value="HOMEOBOX"/>
</dbReference>
<dbReference type="SMART" id="SM00389">
    <property type="entry name" value="HOX"/>
    <property type="match status" value="1"/>
</dbReference>
<dbReference type="SUPFAM" id="SSF46689">
    <property type="entry name" value="Homeodomain-like"/>
    <property type="match status" value="1"/>
</dbReference>
<dbReference type="PROSITE" id="PS00032">
    <property type="entry name" value="ANTENNAPEDIA"/>
    <property type="match status" value="1"/>
</dbReference>
<dbReference type="PROSITE" id="PS00027">
    <property type="entry name" value="HOMEOBOX_1"/>
    <property type="match status" value="1"/>
</dbReference>
<dbReference type="PROSITE" id="PS50071">
    <property type="entry name" value="HOMEOBOX_2"/>
    <property type="match status" value="1"/>
</dbReference>